<feature type="chain" id="PRO_1000127265" description="Small ribosomal subunit protein eS6">
    <location>
        <begin position="1"/>
        <end position="125"/>
    </location>
</feature>
<keyword id="KW-0687">Ribonucleoprotein</keyword>
<keyword id="KW-0689">Ribosomal protein</keyword>
<evidence type="ECO:0000255" key="1">
    <source>
        <dbReference type="HAMAP-Rule" id="MF_00512"/>
    </source>
</evidence>
<evidence type="ECO:0000305" key="2"/>
<protein>
    <recommendedName>
        <fullName evidence="1">Small ribosomal subunit protein eS6</fullName>
    </recommendedName>
    <alternativeName>
        <fullName evidence="2">30S ribosomal protein S6e</fullName>
    </alternativeName>
</protein>
<comment type="similarity">
    <text evidence="1">Belongs to the eukaryotic ribosomal protein eS6 family.</text>
</comment>
<sequence length="125" mass="13850">MATFKLVISNPKNGIARQVEISGEEAEKLIGKRIGEEISAKELGLNLTEIFGEEIPADTKLKITGGTDKDGFPMRPDVHGPRRVKILVSRGPGFRPKEKGERRKKTVRGNTISPEIVQINMKLVF</sequence>
<accession>B6YW70</accession>
<organism>
    <name type="scientific">Thermococcus onnurineus (strain NA1)</name>
    <dbReference type="NCBI Taxonomy" id="523850"/>
    <lineage>
        <taxon>Archaea</taxon>
        <taxon>Methanobacteriati</taxon>
        <taxon>Methanobacteriota</taxon>
        <taxon>Thermococci</taxon>
        <taxon>Thermococcales</taxon>
        <taxon>Thermococcaceae</taxon>
        <taxon>Thermococcus</taxon>
    </lineage>
</organism>
<name>RS6E_THEON</name>
<gene>
    <name evidence="1" type="primary">rps6e</name>
    <name type="ordered locus">TON_1945</name>
</gene>
<proteinExistence type="inferred from homology"/>
<dbReference type="EMBL" id="CP000855">
    <property type="protein sequence ID" value="ACJ17436.1"/>
    <property type="molecule type" value="Genomic_DNA"/>
</dbReference>
<dbReference type="RefSeq" id="WP_012572907.1">
    <property type="nucleotide sequence ID" value="NC_011529.1"/>
</dbReference>
<dbReference type="SMR" id="B6YW70"/>
<dbReference type="STRING" id="523850.TON_1945"/>
<dbReference type="GeneID" id="7017619"/>
<dbReference type="KEGG" id="ton:TON_1945"/>
<dbReference type="PATRIC" id="fig|523850.10.peg.1960"/>
<dbReference type="eggNOG" id="arCOG01946">
    <property type="taxonomic scope" value="Archaea"/>
</dbReference>
<dbReference type="HOGENOM" id="CLU_109671_1_1_2"/>
<dbReference type="OrthoDB" id="7793at2157"/>
<dbReference type="Proteomes" id="UP000002727">
    <property type="component" value="Chromosome"/>
</dbReference>
<dbReference type="GO" id="GO:1990904">
    <property type="term" value="C:ribonucleoprotein complex"/>
    <property type="evidence" value="ECO:0007669"/>
    <property type="project" value="UniProtKB-KW"/>
</dbReference>
<dbReference type="GO" id="GO:0005840">
    <property type="term" value="C:ribosome"/>
    <property type="evidence" value="ECO:0007669"/>
    <property type="project" value="UniProtKB-KW"/>
</dbReference>
<dbReference type="GO" id="GO:0003735">
    <property type="term" value="F:structural constituent of ribosome"/>
    <property type="evidence" value="ECO:0007669"/>
    <property type="project" value="InterPro"/>
</dbReference>
<dbReference type="GO" id="GO:0006412">
    <property type="term" value="P:translation"/>
    <property type="evidence" value="ECO:0007669"/>
    <property type="project" value="UniProtKB-UniRule"/>
</dbReference>
<dbReference type="HAMAP" id="MF_00512">
    <property type="entry name" value="Ribosomal_eS6"/>
    <property type="match status" value="1"/>
</dbReference>
<dbReference type="InterPro" id="IPR001377">
    <property type="entry name" value="Ribosomal_eS6"/>
</dbReference>
<dbReference type="InterPro" id="IPR020924">
    <property type="entry name" value="Ribosomal_eS6_arc"/>
</dbReference>
<dbReference type="InterPro" id="IPR018282">
    <property type="entry name" value="Ribosomal_eS6_CS"/>
</dbReference>
<dbReference type="NCBIfam" id="NF003293">
    <property type="entry name" value="PRK04290.1-2"/>
    <property type="match status" value="1"/>
</dbReference>
<dbReference type="NCBIfam" id="NF003294">
    <property type="entry name" value="PRK04290.1-3"/>
    <property type="match status" value="1"/>
</dbReference>
<dbReference type="PANTHER" id="PTHR11502">
    <property type="entry name" value="40S RIBOSOMAL PROTEIN S6"/>
    <property type="match status" value="1"/>
</dbReference>
<dbReference type="Pfam" id="PF01092">
    <property type="entry name" value="Ribosomal_S6e"/>
    <property type="match status" value="1"/>
</dbReference>
<dbReference type="SMART" id="SM01405">
    <property type="entry name" value="Ribosomal_S6e"/>
    <property type="match status" value="1"/>
</dbReference>
<dbReference type="PROSITE" id="PS00578">
    <property type="entry name" value="RIBOSOMAL_S6E"/>
    <property type="match status" value="1"/>
</dbReference>
<reference key="1">
    <citation type="journal article" date="2008" name="J. Bacteriol.">
        <title>The complete genome sequence of Thermococcus onnurineus NA1 reveals a mixed heterotrophic and carboxydotrophic metabolism.</title>
        <authorList>
            <person name="Lee H.S."/>
            <person name="Kang S.G."/>
            <person name="Bae S.S."/>
            <person name="Lim J.K."/>
            <person name="Cho Y."/>
            <person name="Kim Y.J."/>
            <person name="Jeon J.H."/>
            <person name="Cha S.-S."/>
            <person name="Kwon K.K."/>
            <person name="Kim H.-T."/>
            <person name="Park C.-J."/>
            <person name="Lee H.-W."/>
            <person name="Kim S.I."/>
            <person name="Chun J."/>
            <person name="Colwell R.R."/>
            <person name="Kim S.-J."/>
            <person name="Lee J.-H."/>
        </authorList>
    </citation>
    <scope>NUCLEOTIDE SEQUENCE [LARGE SCALE GENOMIC DNA]</scope>
    <source>
        <strain>NA1</strain>
    </source>
</reference>